<comment type="function">
    <text evidence="1">Receptor for TNFSF2/TNF-alpha and homotrimeric TNFSF1/lymphotoxin-alpha. The adapter molecule FADD recruits caspase-8 to the activated receptor. The resulting death-inducing signaling complex (DISC) performs caspase-8 proteolytic activation which initiates the subsequent cascade of caspases (aspartate-specific cysteine proteases) mediating apoptosis (By similarity).</text>
</comment>
<comment type="subunit">
    <text evidence="2 3">Binding of TNF to the extracellular domain leads to homotrimerization. The aggregated death domains provide a novel molecular interface that interacts specifically with the death domain of TRADD. Various TRADD-interacting proteins such as TRAFS, RIPK1 and possibly FADD, are recruited to the complex by their association with TRADD. This complex activates at least two distinct signaling cascades, apoptosis and NF-kappa-B signaling. Interacts with BAG4, BABAM2, FEM1B, GRB2, SQSTM1 and TRPC4AP. Interacts with DAB2IP. Interacts directly with NOL3 (via CARD domain); inhibits TNF-signaling pathway. Interacts with SH3RF2, TRADD and RIPK1. SH3RF2 facilitates the recruitment of RIPK1 and TRADD to TNFRSF1A in a TNF-alpha-dependent process. Interacts with PGLYRP1; this interaction is important for cell death induction. Interacts (via death domain) with MADD (via death domain) (By similarity).</text>
</comment>
<comment type="subcellular location">
    <subcellularLocation>
        <location>Cell membrane</location>
        <topology>Single-pass type I membrane protein</topology>
    </subcellularLocation>
    <subcellularLocation>
        <location evidence="1">Golgi apparatus membrane</location>
        <topology evidence="1">Single-pass type I membrane protein</topology>
    </subcellularLocation>
</comment>
<organism>
    <name type="scientific">Rattus norvegicus</name>
    <name type="common">Rat</name>
    <dbReference type="NCBI Taxonomy" id="10116"/>
    <lineage>
        <taxon>Eukaryota</taxon>
        <taxon>Metazoa</taxon>
        <taxon>Chordata</taxon>
        <taxon>Craniata</taxon>
        <taxon>Vertebrata</taxon>
        <taxon>Euteleostomi</taxon>
        <taxon>Mammalia</taxon>
        <taxon>Eutheria</taxon>
        <taxon>Euarchontoglires</taxon>
        <taxon>Glires</taxon>
        <taxon>Rodentia</taxon>
        <taxon>Myomorpha</taxon>
        <taxon>Muroidea</taxon>
        <taxon>Muridae</taxon>
        <taxon>Murinae</taxon>
        <taxon>Rattus</taxon>
    </lineage>
</organism>
<gene>
    <name type="primary">Tnfrsf1a</name>
    <name type="synonym">Tnfr-1</name>
    <name type="synonym">Tnfr1</name>
</gene>
<name>TNR1A_RAT</name>
<accession>P22934</accession>
<accession>Q5U1X6</accession>
<accession>Q91V30</accession>
<accession>Q91Y93</accession>
<evidence type="ECO:0000250" key="1"/>
<evidence type="ECO:0000250" key="2">
    <source>
        <dbReference type="UniProtKB" id="P19438"/>
    </source>
</evidence>
<evidence type="ECO:0000250" key="3">
    <source>
        <dbReference type="UniProtKB" id="P25118"/>
    </source>
</evidence>
<evidence type="ECO:0000255" key="4"/>
<evidence type="ECO:0000255" key="5">
    <source>
        <dbReference type="PROSITE-ProRule" id="PRU00064"/>
    </source>
</evidence>
<evidence type="ECO:0000255" key="6">
    <source>
        <dbReference type="PROSITE-ProRule" id="PRU00206"/>
    </source>
</evidence>
<evidence type="ECO:0000269" key="7">
    <source>
    </source>
</evidence>
<evidence type="ECO:0000269" key="8">
    <source>
    </source>
</evidence>
<reference key="1">
    <citation type="journal article" date="1990" name="DNA Cell Biol.">
        <title>Molecular cloning and expression of human and rat tumor necrosis factor receptor chain (p60) and its soluble derivative, tumor necrosis factor-binding protein.</title>
        <authorList>
            <person name="Himmler A."/>
            <person name="Maurer-Fogy I."/>
            <person name="Kroenke M."/>
            <person name="Scheurich P."/>
            <person name="Pfizenmaier K."/>
            <person name="Lantz M."/>
            <person name="Olsson I."/>
            <person name="Hauptmann R."/>
            <person name="Stratowa C."/>
            <person name="Adolf G.R."/>
        </authorList>
    </citation>
    <scope>NUCLEOTIDE SEQUENCE [MRNA]</scope>
</reference>
<reference key="2">
    <citation type="journal article" date="2001" name="Immunogenetics">
        <title>Polymorphisms of the tumor necrosis factor receptor type 1 locus among autoimmune susceptible and resistant inbred rat strains.</title>
        <authorList>
            <person name="Furuya T."/>
            <person name="Salstrom J.L."/>
            <person name="Joe B."/>
            <person name="Hashiramoto A."/>
            <person name="Dobbins D.E."/>
            <person name="Wilder R.L."/>
            <person name="Remmers E.F."/>
        </authorList>
    </citation>
    <scope>NUCLEOTIDE SEQUENCE [MRNA]</scope>
    <scope>VARIANTS VAL-230 AND PRO-295</scope>
    <source>
        <strain>ACI/SegHsd</strain>
        <strain>BB(DR)/Wor</strain>
        <strain>Brown Norway/SsNHsd</strain>
        <strain>DA/Bkl</strain>
        <strain>F344/NHsd</strain>
        <strain>LEW/NHsd</strain>
    </source>
</reference>
<reference key="3">
    <citation type="journal article" date="2004" name="Genome Res.">
        <title>The status, quality, and expansion of the NIH full-length cDNA project: the Mammalian Gene Collection (MGC).</title>
        <authorList>
            <consortium name="The MGC Project Team"/>
        </authorList>
    </citation>
    <scope>NUCLEOTIDE SEQUENCE [LARGE SCALE MRNA]</scope>
    <scope>VARIANTS VAL-230 AND PRO-295</scope>
    <source>
        <tissue>Kidney</tissue>
    </source>
</reference>
<feature type="signal peptide" evidence="2">
    <location>
        <begin position="1"/>
        <end position="29"/>
    </location>
</feature>
<feature type="chain" id="PRO_0000034547" description="Tumor necrosis factor receptor superfamily member 1A">
    <location>
        <begin position="30"/>
        <end position="461"/>
    </location>
</feature>
<feature type="topological domain" description="Extracellular" evidence="4">
    <location>
        <begin position="30"/>
        <end position="211"/>
    </location>
</feature>
<feature type="transmembrane region" description="Helical" evidence="4">
    <location>
        <begin position="212"/>
        <end position="234"/>
    </location>
</feature>
<feature type="topological domain" description="Cytoplasmic" evidence="4">
    <location>
        <begin position="235"/>
        <end position="461"/>
    </location>
</feature>
<feature type="repeat" description="TNFR-Cys 1">
    <location>
        <begin position="43"/>
        <end position="82"/>
    </location>
</feature>
<feature type="repeat" description="TNFR-Cys 2">
    <location>
        <begin position="83"/>
        <end position="125"/>
    </location>
</feature>
<feature type="repeat" description="TNFR-Cys 3">
    <location>
        <begin position="126"/>
        <end position="166"/>
    </location>
</feature>
<feature type="repeat" description="TNFR-Cys 4">
    <location>
        <begin position="167"/>
        <end position="196"/>
    </location>
</feature>
<feature type="domain" description="Death" evidence="5">
    <location>
        <begin position="363"/>
        <end position="448"/>
    </location>
</feature>
<feature type="region of interest" description="N-SMase activation domain (NSD)">
    <location>
        <begin position="344"/>
        <end position="354"/>
    </location>
</feature>
<feature type="glycosylation site" description="N-linked (GlcNAc...) asparagine" evidence="4">
    <location>
        <position position="54"/>
    </location>
</feature>
<feature type="glycosylation site" description="N-linked (GlcNAc...) asparagine" evidence="4">
    <location>
        <position position="151"/>
    </location>
</feature>
<feature type="glycosylation site" description="N-linked (GlcNAc...) asparagine" evidence="4">
    <location>
        <position position="201"/>
    </location>
</feature>
<feature type="disulfide bond" evidence="6">
    <location>
        <begin position="44"/>
        <end position="58"/>
    </location>
</feature>
<feature type="disulfide bond" evidence="6">
    <location>
        <begin position="59"/>
        <end position="72"/>
    </location>
</feature>
<feature type="disulfide bond" evidence="6">
    <location>
        <begin position="62"/>
        <end position="81"/>
    </location>
</feature>
<feature type="disulfide bond" evidence="6">
    <location>
        <begin position="84"/>
        <end position="99"/>
    </location>
</feature>
<feature type="disulfide bond" evidence="6">
    <location>
        <begin position="102"/>
        <end position="117"/>
    </location>
</feature>
<feature type="disulfide bond" evidence="6">
    <location>
        <begin position="105"/>
        <end position="125"/>
    </location>
</feature>
<feature type="disulfide bond" evidence="6">
    <location>
        <begin position="127"/>
        <end position="143"/>
    </location>
</feature>
<feature type="disulfide bond" evidence="6">
    <location>
        <begin position="146"/>
        <end position="158"/>
    </location>
</feature>
<feature type="disulfide bond" evidence="6">
    <location>
        <begin position="149"/>
        <end position="166"/>
    </location>
</feature>
<feature type="disulfide bond" evidence="6">
    <location>
        <begin position="168"/>
        <end position="179"/>
    </location>
</feature>
<feature type="disulfide bond" evidence="6">
    <location>
        <begin position="182"/>
        <end position="195"/>
    </location>
</feature>
<feature type="disulfide bond" evidence="6">
    <location>
        <begin position="185"/>
        <end position="191"/>
    </location>
</feature>
<feature type="sequence variant" description="In strain: LEW/NHsd, ACI/SegHsd, DA/Bkl and F344/NHsd." evidence="7 8">
    <original>I</original>
    <variation>V</variation>
    <location>
        <position position="230"/>
    </location>
</feature>
<feature type="sequence variant" description="In strain: LEW/NHsd, ACI/SegHsd, DA/Bkl, F344/NHsd and BN/SsNHsd." evidence="7 8">
    <original>H</original>
    <variation>P</variation>
    <location>
        <position position="295"/>
    </location>
</feature>
<sequence length="461" mass="50969">MGLPIVPGLLLSLVLLALLMGIHPSGVTGLVPSLGDREKRDNLCPQGKYAHPKNNSICCTKCHKGTYLVSDCPSPGQETVCEVCDKGTFTASQNHVRQCLSCKTCRKEMFQVEISPCKADMDTVCGCKKNQFQRYLSETHFQCVDCSPCFNGTVTIPCKEKQNTVCNCHAGFFLSGNECTPCSHCKKNQECMKLCLPPVANVTNPQDSGTAVLLPLVIFLGLCLLFFICISLLCRYPQWRPRVYSIICRDSAPVKEVEGEGIVTKPLTPASIPAFSPNPGFNPTLGFSTTPRFSHPVSSTPISPVFGPSNWHNFVPPVREVVPTQGADPLLYGSLNPVPIPAPVRKWEDVVAAQPQRLDTADPAMLYAVVDGVPPTRWKEFMRLLGLSEHEIERLELQNGRCLREAHYSMLEAWRRRTPRHEATLDVVGRVLCDMNLRGCLENIRETLESPAHSSTTHLPR</sequence>
<proteinExistence type="evidence at transcript level"/>
<protein>
    <recommendedName>
        <fullName>Tumor necrosis factor receptor superfamily member 1A</fullName>
    </recommendedName>
    <alternativeName>
        <fullName>Tumor necrosis factor receptor 1</fullName>
        <shortName>TNF-R1</shortName>
    </alternativeName>
    <alternativeName>
        <fullName>Tumor necrosis factor receptor type I</fullName>
        <shortName>TNF-RI</shortName>
        <shortName>TNFR-I</shortName>
    </alternativeName>
    <alternativeName>
        <fullName>p55</fullName>
    </alternativeName>
    <alternativeName>
        <fullName>p60</fullName>
    </alternativeName>
    <cdAntigenName>CD120a</cdAntigenName>
</protein>
<keyword id="KW-0053">Apoptosis</keyword>
<keyword id="KW-1003">Cell membrane</keyword>
<keyword id="KW-1015">Disulfide bond</keyword>
<keyword id="KW-0325">Glycoprotein</keyword>
<keyword id="KW-0333">Golgi apparatus</keyword>
<keyword id="KW-0472">Membrane</keyword>
<keyword id="KW-0675">Receptor</keyword>
<keyword id="KW-1185">Reference proteome</keyword>
<keyword id="KW-0677">Repeat</keyword>
<keyword id="KW-0732">Signal</keyword>
<keyword id="KW-0812">Transmembrane</keyword>
<keyword id="KW-1133">Transmembrane helix</keyword>
<dbReference type="EMBL" id="M63122">
    <property type="protein sequence ID" value="AAA42256.1"/>
    <property type="molecule type" value="mRNA"/>
</dbReference>
<dbReference type="EMBL" id="AF329976">
    <property type="protein sequence ID" value="AAK53562.1"/>
    <property type="molecule type" value="mRNA"/>
</dbReference>
<dbReference type="EMBL" id="AF329977">
    <property type="protein sequence ID" value="AAK53563.1"/>
    <property type="molecule type" value="mRNA"/>
</dbReference>
<dbReference type="EMBL" id="AF329978">
    <property type="protein sequence ID" value="AAK53564.1"/>
    <property type="molecule type" value="mRNA"/>
</dbReference>
<dbReference type="EMBL" id="AF329979">
    <property type="protein sequence ID" value="AAK53565.1"/>
    <property type="molecule type" value="mRNA"/>
</dbReference>
<dbReference type="EMBL" id="AF329980">
    <property type="protein sequence ID" value="AAK53566.1"/>
    <property type="molecule type" value="mRNA"/>
</dbReference>
<dbReference type="EMBL" id="AF329981">
    <property type="protein sequence ID" value="AAK53567.1"/>
    <property type="molecule type" value="mRNA"/>
</dbReference>
<dbReference type="EMBL" id="BC086413">
    <property type="protein sequence ID" value="AAH86413.1"/>
    <property type="molecule type" value="mRNA"/>
</dbReference>
<dbReference type="PIR" id="B36555">
    <property type="entry name" value="GQRTT1"/>
</dbReference>
<dbReference type="RefSeq" id="NP_037223.1">
    <property type="nucleotide sequence ID" value="NM_013091.1"/>
</dbReference>
<dbReference type="SMR" id="P22934"/>
<dbReference type="BioGRID" id="247654">
    <property type="interactions" value="2"/>
</dbReference>
<dbReference type="FunCoup" id="P22934">
    <property type="interactions" value="789"/>
</dbReference>
<dbReference type="IntAct" id="P22934">
    <property type="interactions" value="1"/>
</dbReference>
<dbReference type="STRING" id="10116.ENSRNOP00000042371"/>
<dbReference type="GlyCosmos" id="P22934">
    <property type="glycosylation" value="3 sites, No reported glycans"/>
</dbReference>
<dbReference type="GlyGen" id="P22934">
    <property type="glycosylation" value="3 sites"/>
</dbReference>
<dbReference type="PhosphoSitePlus" id="P22934"/>
<dbReference type="PaxDb" id="10116-ENSRNOP00000042371"/>
<dbReference type="GeneID" id="25625"/>
<dbReference type="KEGG" id="rno:25625"/>
<dbReference type="UCSC" id="RGD:621237">
    <property type="organism name" value="rat"/>
</dbReference>
<dbReference type="AGR" id="RGD:621237"/>
<dbReference type="CTD" id="7132"/>
<dbReference type="RGD" id="621237">
    <property type="gene designation" value="Tnfrsf1a"/>
</dbReference>
<dbReference type="eggNOG" id="ENOG502S050">
    <property type="taxonomic scope" value="Eukaryota"/>
</dbReference>
<dbReference type="InParanoid" id="P22934"/>
<dbReference type="PhylomeDB" id="P22934"/>
<dbReference type="TreeFam" id="TF333916"/>
<dbReference type="Reactome" id="R-RNO-5357786">
    <property type="pathway name" value="TNFR1-induced proapoptotic signaling"/>
</dbReference>
<dbReference type="Reactome" id="R-RNO-5357905">
    <property type="pathway name" value="Regulation of TNFR1 signaling"/>
</dbReference>
<dbReference type="Reactome" id="R-RNO-5357956">
    <property type="pathway name" value="TNFR1-induced NF-kappa-B signaling pathway"/>
</dbReference>
<dbReference type="Reactome" id="R-RNO-5626978">
    <property type="pathway name" value="TNFR1-mediated ceramide production"/>
</dbReference>
<dbReference type="Reactome" id="R-RNO-5669034">
    <property type="pathway name" value="TNFs bind their physiological receptors"/>
</dbReference>
<dbReference type="Reactome" id="R-RNO-75893">
    <property type="pathway name" value="TNF signaling"/>
</dbReference>
<dbReference type="PRO" id="PR:P22934"/>
<dbReference type="Proteomes" id="UP000002494">
    <property type="component" value="Unplaced"/>
</dbReference>
<dbReference type="GO" id="GO:0030424">
    <property type="term" value="C:axon"/>
    <property type="evidence" value="ECO:0000314"/>
    <property type="project" value="RGD"/>
</dbReference>
<dbReference type="GO" id="GO:0009986">
    <property type="term" value="C:cell surface"/>
    <property type="evidence" value="ECO:0000314"/>
    <property type="project" value="RGD"/>
</dbReference>
<dbReference type="GO" id="GO:0005615">
    <property type="term" value="C:extracellular space"/>
    <property type="evidence" value="ECO:0000314"/>
    <property type="project" value="RGD"/>
</dbReference>
<dbReference type="GO" id="GO:0000139">
    <property type="term" value="C:Golgi membrane"/>
    <property type="evidence" value="ECO:0000250"/>
    <property type="project" value="UniProtKB"/>
</dbReference>
<dbReference type="GO" id="GO:0045121">
    <property type="term" value="C:membrane raft"/>
    <property type="evidence" value="ECO:0000266"/>
    <property type="project" value="RGD"/>
</dbReference>
<dbReference type="GO" id="GO:0005886">
    <property type="term" value="C:plasma membrane"/>
    <property type="evidence" value="ECO:0000266"/>
    <property type="project" value="RGD"/>
</dbReference>
<dbReference type="GO" id="GO:0032991">
    <property type="term" value="C:protein-containing complex"/>
    <property type="evidence" value="ECO:0000314"/>
    <property type="project" value="RGD"/>
</dbReference>
<dbReference type="GO" id="GO:0043235">
    <property type="term" value="C:receptor complex"/>
    <property type="evidence" value="ECO:0000266"/>
    <property type="project" value="RGD"/>
</dbReference>
<dbReference type="GO" id="GO:0002020">
    <property type="term" value="F:protease binding"/>
    <property type="evidence" value="ECO:0000353"/>
    <property type="project" value="RGD"/>
</dbReference>
<dbReference type="GO" id="GO:0044877">
    <property type="term" value="F:protein-containing complex binding"/>
    <property type="evidence" value="ECO:0000353"/>
    <property type="project" value="RGD"/>
</dbReference>
<dbReference type="GO" id="GO:0038023">
    <property type="term" value="F:signaling receptor activity"/>
    <property type="evidence" value="ECO:0000266"/>
    <property type="project" value="RGD"/>
</dbReference>
<dbReference type="GO" id="GO:0043120">
    <property type="term" value="F:tumor necrosis factor binding"/>
    <property type="evidence" value="ECO:0000353"/>
    <property type="project" value="RGD"/>
</dbReference>
<dbReference type="GO" id="GO:0005031">
    <property type="term" value="F:tumor necrosis factor receptor activity"/>
    <property type="evidence" value="ECO:0000315"/>
    <property type="project" value="RGD"/>
</dbReference>
<dbReference type="GO" id="GO:0003176">
    <property type="term" value="P:aortic valve development"/>
    <property type="evidence" value="ECO:0000266"/>
    <property type="project" value="RGD"/>
</dbReference>
<dbReference type="GO" id="GO:0007166">
    <property type="term" value="P:cell surface receptor signaling pathway"/>
    <property type="evidence" value="ECO:0000250"/>
    <property type="project" value="UniProtKB"/>
</dbReference>
<dbReference type="GO" id="GO:0007259">
    <property type="term" value="P:cell surface receptor signaling pathway via JAK-STAT"/>
    <property type="evidence" value="ECO:0000266"/>
    <property type="project" value="RGD"/>
</dbReference>
<dbReference type="GO" id="GO:0071392">
    <property type="term" value="P:cellular response to estradiol stimulus"/>
    <property type="evidence" value="ECO:0000270"/>
    <property type="project" value="RGD"/>
</dbReference>
<dbReference type="GO" id="GO:0071260">
    <property type="term" value="P:cellular response to mechanical stimulus"/>
    <property type="evidence" value="ECO:0000266"/>
    <property type="project" value="RGD"/>
</dbReference>
<dbReference type="GO" id="GO:0019221">
    <property type="term" value="P:cytokine-mediated signaling pathway"/>
    <property type="evidence" value="ECO:0000250"/>
    <property type="project" value="UniProtKB"/>
</dbReference>
<dbReference type="GO" id="GO:0006952">
    <property type="term" value="P:defense response"/>
    <property type="evidence" value="ECO:0000250"/>
    <property type="project" value="UniProtKB"/>
</dbReference>
<dbReference type="GO" id="GO:0042742">
    <property type="term" value="P:defense response to bacterium"/>
    <property type="evidence" value="ECO:0000266"/>
    <property type="project" value="RGD"/>
</dbReference>
<dbReference type="GO" id="GO:0006954">
    <property type="term" value="P:inflammatory response"/>
    <property type="evidence" value="ECO:0000250"/>
    <property type="project" value="UniProtKB"/>
</dbReference>
<dbReference type="GO" id="GO:0008630">
    <property type="term" value="P:intrinsic apoptotic signaling pathway in response to DNA damage"/>
    <property type="evidence" value="ECO:0000266"/>
    <property type="project" value="RGD"/>
</dbReference>
<dbReference type="GO" id="GO:0043066">
    <property type="term" value="P:negative regulation of apoptotic process"/>
    <property type="evidence" value="ECO:0000315"/>
    <property type="project" value="RGD"/>
</dbReference>
<dbReference type="GO" id="GO:0010614">
    <property type="term" value="P:negative regulation of cardiac muscle hypertrophy"/>
    <property type="evidence" value="ECO:0000266"/>
    <property type="project" value="RGD"/>
</dbReference>
<dbReference type="GO" id="GO:0003332">
    <property type="term" value="P:negative regulation of extracellular matrix constituent secretion"/>
    <property type="evidence" value="ECO:0000266"/>
    <property type="project" value="RGD"/>
</dbReference>
<dbReference type="GO" id="GO:0010629">
    <property type="term" value="P:negative regulation of gene expression"/>
    <property type="evidence" value="ECO:0000314"/>
    <property type="project" value="RGD"/>
</dbReference>
<dbReference type="GO" id="GO:0050728">
    <property type="term" value="P:negative regulation of inflammatory response"/>
    <property type="evidence" value="ECO:0000266"/>
    <property type="project" value="RGD"/>
</dbReference>
<dbReference type="GO" id="GO:0032715">
    <property type="term" value="P:negative regulation of interleukin-6 production"/>
    <property type="evidence" value="ECO:0000314"/>
    <property type="project" value="RGD"/>
</dbReference>
<dbReference type="GO" id="GO:0034250">
    <property type="term" value="P:positive regulation of amide metabolic process"/>
    <property type="evidence" value="ECO:0000266"/>
    <property type="project" value="RGD"/>
</dbReference>
<dbReference type="GO" id="GO:0045766">
    <property type="term" value="P:positive regulation of angiogenesis"/>
    <property type="evidence" value="ECO:0000315"/>
    <property type="project" value="RGD"/>
</dbReference>
<dbReference type="GO" id="GO:1902339">
    <property type="term" value="P:positive regulation of apoptotic process involved in morphogenesis"/>
    <property type="evidence" value="ECO:0000266"/>
    <property type="project" value="RGD"/>
</dbReference>
<dbReference type="GO" id="GO:0043123">
    <property type="term" value="P:positive regulation of canonical NF-kappaB signal transduction"/>
    <property type="evidence" value="ECO:0000266"/>
    <property type="project" value="RGD"/>
</dbReference>
<dbReference type="GO" id="GO:1900119">
    <property type="term" value="P:positive regulation of execution phase of apoptosis"/>
    <property type="evidence" value="ECO:0000266"/>
    <property type="project" value="RGD"/>
</dbReference>
<dbReference type="GO" id="GO:0010628">
    <property type="term" value="P:positive regulation of gene expression"/>
    <property type="evidence" value="ECO:0000315"/>
    <property type="project" value="RGD"/>
</dbReference>
<dbReference type="GO" id="GO:0050729">
    <property type="term" value="P:positive regulation of inflammatory response"/>
    <property type="evidence" value="ECO:0000250"/>
    <property type="project" value="UniProtKB"/>
</dbReference>
<dbReference type="GO" id="GO:0045834">
    <property type="term" value="P:positive regulation of lipid metabolic process"/>
    <property type="evidence" value="ECO:0000266"/>
    <property type="project" value="RGD"/>
</dbReference>
<dbReference type="GO" id="GO:0043525">
    <property type="term" value="P:positive regulation of neuron apoptotic process"/>
    <property type="evidence" value="ECO:0000315"/>
    <property type="project" value="RGD"/>
</dbReference>
<dbReference type="GO" id="GO:0042307">
    <property type="term" value="P:positive regulation of protein import into nucleus"/>
    <property type="evidence" value="ECO:0000315"/>
    <property type="project" value="RGD"/>
</dbReference>
<dbReference type="GO" id="GO:0045944">
    <property type="term" value="P:positive regulation of transcription by RNA polymerase II"/>
    <property type="evidence" value="ECO:0000250"/>
    <property type="project" value="UniProtKB"/>
</dbReference>
<dbReference type="GO" id="GO:0032760">
    <property type="term" value="P:positive regulation of tumor necrosis factor production"/>
    <property type="evidence" value="ECO:0000315"/>
    <property type="project" value="RGD"/>
</dbReference>
<dbReference type="GO" id="GO:0006693">
    <property type="term" value="P:prostaglandin metabolic process"/>
    <property type="evidence" value="ECO:0007669"/>
    <property type="project" value="InterPro"/>
</dbReference>
<dbReference type="GO" id="GO:0072659">
    <property type="term" value="P:protein localization to plasma membrane"/>
    <property type="evidence" value="ECO:0000266"/>
    <property type="project" value="RGD"/>
</dbReference>
<dbReference type="GO" id="GO:0003177">
    <property type="term" value="P:pulmonary valve development"/>
    <property type="evidence" value="ECO:0000266"/>
    <property type="project" value="RGD"/>
</dbReference>
<dbReference type="GO" id="GO:0042981">
    <property type="term" value="P:regulation of apoptotic process"/>
    <property type="evidence" value="ECO:0000315"/>
    <property type="project" value="RGD"/>
</dbReference>
<dbReference type="GO" id="GO:1903140">
    <property type="term" value="P:regulation of establishment of endothelial barrier"/>
    <property type="evidence" value="ECO:0000266"/>
    <property type="project" value="RGD"/>
</dbReference>
<dbReference type="GO" id="GO:1905038">
    <property type="term" value="P:regulation of membrane lipid metabolic process"/>
    <property type="evidence" value="ECO:0000266"/>
    <property type="project" value="RGD"/>
</dbReference>
<dbReference type="GO" id="GO:0010803">
    <property type="term" value="P:regulation of tumor necrosis factor-mediated signaling pathway"/>
    <property type="evidence" value="ECO:0000266"/>
    <property type="project" value="RGD"/>
</dbReference>
<dbReference type="GO" id="GO:0043279">
    <property type="term" value="P:response to alkaloid"/>
    <property type="evidence" value="ECO:0000270"/>
    <property type="project" value="RGD"/>
</dbReference>
<dbReference type="GO" id="GO:0043200">
    <property type="term" value="P:response to amino acid"/>
    <property type="evidence" value="ECO:0000270"/>
    <property type="project" value="RGD"/>
</dbReference>
<dbReference type="GO" id="GO:0045471">
    <property type="term" value="P:response to ethanol"/>
    <property type="evidence" value="ECO:0000270"/>
    <property type="project" value="RGD"/>
</dbReference>
<dbReference type="GO" id="GO:0001666">
    <property type="term" value="P:response to hypoxia"/>
    <property type="evidence" value="ECO:0000270"/>
    <property type="project" value="RGD"/>
</dbReference>
<dbReference type="GO" id="GO:0032496">
    <property type="term" value="P:response to lipopolysaccharide"/>
    <property type="evidence" value="ECO:0000270"/>
    <property type="project" value="RGD"/>
</dbReference>
<dbReference type="GO" id="GO:0006366">
    <property type="term" value="P:transcription by RNA polymerase II"/>
    <property type="evidence" value="ECO:0000266"/>
    <property type="project" value="RGD"/>
</dbReference>
<dbReference type="GO" id="GO:0033209">
    <property type="term" value="P:tumor necrosis factor-mediated signaling pathway"/>
    <property type="evidence" value="ECO:0000315"/>
    <property type="project" value="RGD"/>
</dbReference>
<dbReference type="CDD" id="cd08313">
    <property type="entry name" value="Death_TNFR1"/>
    <property type="match status" value="1"/>
</dbReference>
<dbReference type="CDD" id="cd10576">
    <property type="entry name" value="TNFRSF1A"/>
    <property type="match status" value="1"/>
</dbReference>
<dbReference type="FunFam" id="1.10.533.10:FF:000044">
    <property type="entry name" value="Tumor necrosis factor receptor superfamily member 1A"/>
    <property type="match status" value="1"/>
</dbReference>
<dbReference type="FunFam" id="2.10.50.10:FF:000020">
    <property type="entry name" value="Tumor necrosis factor receptor superfamily member 1A"/>
    <property type="match status" value="1"/>
</dbReference>
<dbReference type="FunFam" id="2.10.50.10:FF:000025">
    <property type="entry name" value="Tumor necrosis factor receptor superfamily member 1A"/>
    <property type="match status" value="1"/>
</dbReference>
<dbReference type="Gene3D" id="1.10.533.10">
    <property type="entry name" value="Death Domain, Fas"/>
    <property type="match status" value="1"/>
</dbReference>
<dbReference type="Gene3D" id="2.10.50.10">
    <property type="entry name" value="Tumor Necrosis Factor Receptor, subunit A, domain 2"/>
    <property type="match status" value="2"/>
</dbReference>
<dbReference type="InterPro" id="IPR011029">
    <property type="entry name" value="DEATH-like_dom_sf"/>
</dbReference>
<dbReference type="InterPro" id="IPR000488">
    <property type="entry name" value="Death_dom"/>
</dbReference>
<dbReference type="InterPro" id="IPR001368">
    <property type="entry name" value="TNFR/NGFR_Cys_rich_reg"/>
</dbReference>
<dbReference type="InterPro" id="IPR020419">
    <property type="entry name" value="TNFR_1A"/>
</dbReference>
<dbReference type="InterPro" id="IPR052493">
    <property type="entry name" value="TNFRSF1A"/>
</dbReference>
<dbReference type="InterPro" id="IPR033994">
    <property type="entry name" value="TNFRSF1A_death"/>
</dbReference>
<dbReference type="InterPro" id="IPR033993">
    <property type="entry name" value="TNFRSF1A_N"/>
</dbReference>
<dbReference type="PANTHER" id="PTHR46861">
    <property type="entry name" value="TUMOR NECROSIS FACTOR RECEPTOR SUPERFAMILY MEMBER 1A"/>
    <property type="match status" value="1"/>
</dbReference>
<dbReference type="PANTHER" id="PTHR46861:SF1">
    <property type="entry name" value="TUMOR NECROSIS FACTOR RECEPTOR SUPERFAMILY MEMBER 1A"/>
    <property type="match status" value="1"/>
</dbReference>
<dbReference type="Pfam" id="PF00531">
    <property type="entry name" value="Death"/>
    <property type="match status" value="1"/>
</dbReference>
<dbReference type="Pfam" id="PF00020">
    <property type="entry name" value="TNFR_c6"/>
    <property type="match status" value="3"/>
</dbReference>
<dbReference type="PRINTS" id="PR01918">
    <property type="entry name" value="TNFACTORR1A"/>
</dbReference>
<dbReference type="SMART" id="SM00005">
    <property type="entry name" value="DEATH"/>
    <property type="match status" value="1"/>
</dbReference>
<dbReference type="SMART" id="SM00208">
    <property type="entry name" value="TNFR"/>
    <property type="match status" value="4"/>
</dbReference>
<dbReference type="SUPFAM" id="SSF47986">
    <property type="entry name" value="DEATH domain"/>
    <property type="match status" value="1"/>
</dbReference>
<dbReference type="SUPFAM" id="SSF57586">
    <property type="entry name" value="TNF receptor-like"/>
    <property type="match status" value="3"/>
</dbReference>
<dbReference type="PROSITE" id="PS50017">
    <property type="entry name" value="DEATH_DOMAIN"/>
    <property type="match status" value="1"/>
</dbReference>
<dbReference type="PROSITE" id="PS00652">
    <property type="entry name" value="TNFR_NGFR_1"/>
    <property type="match status" value="3"/>
</dbReference>
<dbReference type="PROSITE" id="PS50050">
    <property type="entry name" value="TNFR_NGFR_2"/>
    <property type="match status" value="3"/>
</dbReference>